<dbReference type="EC" id="2.3.2.6" evidence="1"/>
<dbReference type="EMBL" id="CP001396">
    <property type="protein sequence ID" value="ACR63640.1"/>
    <property type="molecule type" value="Genomic_DNA"/>
</dbReference>
<dbReference type="RefSeq" id="WP_001241678.1">
    <property type="nucleotide sequence ID" value="NC_012759.1"/>
</dbReference>
<dbReference type="SMR" id="C4ZQ11"/>
<dbReference type="GeneID" id="75206174"/>
<dbReference type="KEGG" id="ebw:BWG_0737"/>
<dbReference type="HOGENOM" id="CLU_075045_0_0_6"/>
<dbReference type="GO" id="GO:0005737">
    <property type="term" value="C:cytoplasm"/>
    <property type="evidence" value="ECO:0007669"/>
    <property type="project" value="UniProtKB-SubCell"/>
</dbReference>
<dbReference type="GO" id="GO:0008914">
    <property type="term" value="F:leucyl-tRNA--protein transferase activity"/>
    <property type="evidence" value="ECO:0007669"/>
    <property type="project" value="UniProtKB-UniRule"/>
</dbReference>
<dbReference type="GO" id="GO:0030163">
    <property type="term" value="P:protein catabolic process"/>
    <property type="evidence" value="ECO:0007669"/>
    <property type="project" value="UniProtKB-UniRule"/>
</dbReference>
<dbReference type="FunFam" id="3.30.70.3550:FF:000001">
    <property type="entry name" value="Leucyl/phenylalanyl-tRNA--protein transferase"/>
    <property type="match status" value="1"/>
</dbReference>
<dbReference type="FunFam" id="3.40.630.70:FF:000001">
    <property type="entry name" value="Leucyl/phenylalanyl-tRNA--protein transferase"/>
    <property type="match status" value="1"/>
</dbReference>
<dbReference type="Gene3D" id="3.40.630.70">
    <property type="entry name" value="Leucyl/phenylalanyl-tRNA-protein transferase, C-terminal domain"/>
    <property type="match status" value="1"/>
</dbReference>
<dbReference type="Gene3D" id="3.30.70.3550">
    <property type="entry name" value="Leucyl/phenylalanyl-tRNA-protein transferase, N-terminal domain"/>
    <property type="match status" value="1"/>
</dbReference>
<dbReference type="HAMAP" id="MF_00688">
    <property type="entry name" value="Leu_Phe_trans"/>
    <property type="match status" value="1"/>
</dbReference>
<dbReference type="InterPro" id="IPR016181">
    <property type="entry name" value="Acyl_CoA_acyltransferase"/>
</dbReference>
<dbReference type="InterPro" id="IPR004616">
    <property type="entry name" value="Leu/Phe-tRNA_Trfase"/>
</dbReference>
<dbReference type="InterPro" id="IPR042203">
    <property type="entry name" value="Leu/Phe-tRNA_Trfase_C"/>
</dbReference>
<dbReference type="InterPro" id="IPR042221">
    <property type="entry name" value="Leu/Phe-tRNA_Trfase_N"/>
</dbReference>
<dbReference type="NCBIfam" id="TIGR00667">
    <property type="entry name" value="aat"/>
    <property type="match status" value="1"/>
</dbReference>
<dbReference type="PANTHER" id="PTHR30098">
    <property type="entry name" value="LEUCYL/PHENYLALANYL-TRNA--PROTEIN TRANSFERASE"/>
    <property type="match status" value="1"/>
</dbReference>
<dbReference type="PANTHER" id="PTHR30098:SF2">
    <property type="entry name" value="LEUCYL_PHENYLALANYL-TRNA--PROTEIN TRANSFERASE"/>
    <property type="match status" value="1"/>
</dbReference>
<dbReference type="Pfam" id="PF03588">
    <property type="entry name" value="Leu_Phe_trans"/>
    <property type="match status" value="1"/>
</dbReference>
<dbReference type="SUPFAM" id="SSF55729">
    <property type="entry name" value="Acyl-CoA N-acyltransferases (Nat)"/>
    <property type="match status" value="1"/>
</dbReference>
<feature type="chain" id="PRO_1000212568" description="Leucyl/phenylalanyl-tRNA--protein transferase">
    <location>
        <begin position="1"/>
        <end position="234"/>
    </location>
</feature>
<gene>
    <name evidence="1" type="primary">aat</name>
    <name type="ordered locus">BWG_0737</name>
</gene>
<accession>C4ZQ11</accession>
<organism>
    <name type="scientific">Escherichia coli (strain K12 / MC4100 / BW2952)</name>
    <dbReference type="NCBI Taxonomy" id="595496"/>
    <lineage>
        <taxon>Bacteria</taxon>
        <taxon>Pseudomonadati</taxon>
        <taxon>Pseudomonadota</taxon>
        <taxon>Gammaproteobacteria</taxon>
        <taxon>Enterobacterales</taxon>
        <taxon>Enterobacteriaceae</taxon>
        <taxon>Escherichia</taxon>
    </lineage>
</organism>
<keyword id="KW-0012">Acyltransferase</keyword>
<keyword id="KW-0963">Cytoplasm</keyword>
<keyword id="KW-0808">Transferase</keyword>
<comment type="function">
    <text evidence="1">Functions in the N-end rule pathway of protein degradation where it conjugates Leu, Phe and, less efficiently, Met from aminoacyl-tRNAs to the N-termini of proteins containing an N-terminal arginine or lysine.</text>
</comment>
<comment type="catalytic activity">
    <reaction evidence="1">
        <text>N-terminal L-lysyl-[protein] + L-leucyl-tRNA(Leu) = N-terminal L-leucyl-L-lysyl-[protein] + tRNA(Leu) + H(+)</text>
        <dbReference type="Rhea" id="RHEA:12340"/>
        <dbReference type="Rhea" id="RHEA-COMP:9613"/>
        <dbReference type="Rhea" id="RHEA-COMP:9622"/>
        <dbReference type="Rhea" id="RHEA-COMP:12670"/>
        <dbReference type="Rhea" id="RHEA-COMP:12671"/>
        <dbReference type="ChEBI" id="CHEBI:15378"/>
        <dbReference type="ChEBI" id="CHEBI:65249"/>
        <dbReference type="ChEBI" id="CHEBI:78442"/>
        <dbReference type="ChEBI" id="CHEBI:78494"/>
        <dbReference type="ChEBI" id="CHEBI:133043"/>
        <dbReference type="EC" id="2.3.2.6"/>
    </reaction>
</comment>
<comment type="catalytic activity">
    <reaction evidence="1">
        <text>N-terminal L-arginyl-[protein] + L-leucyl-tRNA(Leu) = N-terminal L-leucyl-L-arginyl-[protein] + tRNA(Leu) + H(+)</text>
        <dbReference type="Rhea" id="RHEA:50416"/>
        <dbReference type="Rhea" id="RHEA-COMP:9613"/>
        <dbReference type="Rhea" id="RHEA-COMP:9622"/>
        <dbReference type="Rhea" id="RHEA-COMP:12672"/>
        <dbReference type="Rhea" id="RHEA-COMP:12673"/>
        <dbReference type="ChEBI" id="CHEBI:15378"/>
        <dbReference type="ChEBI" id="CHEBI:64719"/>
        <dbReference type="ChEBI" id="CHEBI:78442"/>
        <dbReference type="ChEBI" id="CHEBI:78494"/>
        <dbReference type="ChEBI" id="CHEBI:133044"/>
        <dbReference type="EC" id="2.3.2.6"/>
    </reaction>
</comment>
<comment type="catalytic activity">
    <reaction evidence="1">
        <text>L-phenylalanyl-tRNA(Phe) + an N-terminal L-alpha-aminoacyl-[protein] = an N-terminal L-phenylalanyl-L-alpha-aminoacyl-[protein] + tRNA(Phe)</text>
        <dbReference type="Rhea" id="RHEA:43632"/>
        <dbReference type="Rhea" id="RHEA-COMP:9668"/>
        <dbReference type="Rhea" id="RHEA-COMP:9699"/>
        <dbReference type="Rhea" id="RHEA-COMP:10636"/>
        <dbReference type="Rhea" id="RHEA-COMP:10637"/>
        <dbReference type="ChEBI" id="CHEBI:78442"/>
        <dbReference type="ChEBI" id="CHEBI:78531"/>
        <dbReference type="ChEBI" id="CHEBI:78597"/>
        <dbReference type="ChEBI" id="CHEBI:83561"/>
        <dbReference type="EC" id="2.3.2.6"/>
    </reaction>
</comment>
<comment type="subcellular location">
    <subcellularLocation>
        <location evidence="1">Cytoplasm</location>
    </subcellularLocation>
</comment>
<comment type="similarity">
    <text evidence="1">Belongs to the L/F-transferase family.</text>
</comment>
<evidence type="ECO:0000255" key="1">
    <source>
        <dbReference type="HAMAP-Rule" id="MF_00688"/>
    </source>
</evidence>
<sequence>MRLVQLSRHSIAFPSPEGALREPNGLLALGGDLSPARLLMAYQRGIFPWFSPGDPILWWSPDPRAVLWPESLHISRSMKRFHKRSPYRVTMNYAFGQVIEGCASDREEGTWITRGVVEAYHRLHELGHAHSIEVWREDELVGGMYGVAQGTLFCGESMFSRMENASKTALLVFCEEFIGHGGKLIDCQVLNDHTASLGACEIPRRDYLNYLNQMRLGRLPNNFWVPRCLFSPQE</sequence>
<reference key="1">
    <citation type="journal article" date="2009" name="J. Bacteriol.">
        <title>Genomic sequencing reveals regulatory mutations and recombinational events in the widely used MC4100 lineage of Escherichia coli K-12.</title>
        <authorList>
            <person name="Ferenci T."/>
            <person name="Zhou Z."/>
            <person name="Betteridge T."/>
            <person name="Ren Y."/>
            <person name="Liu Y."/>
            <person name="Feng L."/>
            <person name="Reeves P.R."/>
            <person name="Wang L."/>
        </authorList>
    </citation>
    <scope>NUCLEOTIDE SEQUENCE [LARGE SCALE GENOMIC DNA]</scope>
    <source>
        <strain>K12 / MC4100 / BW2952</strain>
    </source>
</reference>
<name>LFTR_ECOBW</name>
<proteinExistence type="inferred from homology"/>
<protein>
    <recommendedName>
        <fullName evidence="1">Leucyl/phenylalanyl-tRNA--protein transferase</fullName>
        <ecNumber evidence="1">2.3.2.6</ecNumber>
    </recommendedName>
    <alternativeName>
        <fullName evidence="1">L/F-transferase</fullName>
    </alternativeName>
    <alternativeName>
        <fullName evidence="1">Leucyltransferase</fullName>
    </alternativeName>
    <alternativeName>
        <fullName evidence="1">Phenyalanyltransferase</fullName>
    </alternativeName>
</protein>